<comment type="cofactor">
    <cofactor evidence="1">
        <name>pyridoxal 5'-phosphate</name>
        <dbReference type="ChEBI" id="CHEBI:597326"/>
    </cofactor>
</comment>
<comment type="subcellular location">
    <subcellularLocation>
        <location evidence="2">Virion</location>
    </subcellularLocation>
</comment>
<comment type="induction">
    <text evidence="3">Expressed in the late phase of the viral replicative cycle.</text>
</comment>
<comment type="similarity">
    <text evidence="3">Belongs to the class-V pyridoxal-phosphate-dependent aminotransferase family. NifS/IscS subfamily.</text>
</comment>
<comment type="caution">
    <text evidence="3">Although related to the NifS/IscS subfamily, lacks the conserved active site, suggesting it has no transferase activity.</text>
</comment>
<proteinExistence type="inferred from homology"/>
<organism>
    <name type="scientific">African swine fever virus (isolate Pig/Kenya/KEN-50/1950)</name>
    <name type="common">ASFV</name>
    <dbReference type="NCBI Taxonomy" id="561445"/>
    <lineage>
        <taxon>Viruses</taxon>
        <taxon>Varidnaviria</taxon>
        <taxon>Bamfordvirae</taxon>
        <taxon>Nucleocytoviricota</taxon>
        <taxon>Pokkesviricetes</taxon>
        <taxon>Asfuvirales</taxon>
        <taxon>Asfarviridae</taxon>
        <taxon>Asfivirus</taxon>
        <taxon>African swine fever virus</taxon>
    </lineage>
</organism>
<accession>P0C9D1</accession>
<sequence>MASILTLDGLYAEVPKFLPEALREGCAGKKPLSFYIQQILNLMGCDGNEYHVLFTSSSEEANTHMIMAVVRRHLLRTQQRPHVIIGAAEPPSVTECVKALAQEKRCVYTIIPLKNFEIDPVAVYDAIQSNTCLACISGTNAVVKTFNKLQEISKVLGAIPLHSEMSDVVYQGCIKQHPPADSFSLNSLYGFLGVGVLGIKKKAMQGLGPLIFGGGLRGGSPNVPGIHAMYKTLTQQRPSIKKINTVHKLFMKILKKHQHVYLPIEGMSSNGMPSNGMPSSGIPVEGPKSLPGYILFSVGRSAEELQKKIFTKFNVKVGRIVNLQEVLFRIKIPQKYWETLLFIQLREDLTKEDIKRVMAILMYLDTVTPRGSLPPPSYSSSFS</sequence>
<name>NIFSL_ASFK5</name>
<organismHost>
    <name type="scientific">Ornithodoros</name>
    <name type="common">relapsing fever ticks</name>
    <dbReference type="NCBI Taxonomy" id="6937"/>
</organismHost>
<organismHost>
    <name type="scientific">Phacochoerus aethiopicus</name>
    <name type="common">Warthog</name>
    <dbReference type="NCBI Taxonomy" id="85517"/>
</organismHost>
<organismHost>
    <name type="scientific">Phacochoerus africanus</name>
    <name type="common">Warthog</name>
    <dbReference type="NCBI Taxonomy" id="41426"/>
</organismHost>
<organismHost>
    <name type="scientific">Potamochoerus larvatus</name>
    <name type="common">Bushpig</name>
    <dbReference type="NCBI Taxonomy" id="273792"/>
</organismHost>
<organismHost>
    <name type="scientific">Sus scrofa</name>
    <name type="common">Pig</name>
    <dbReference type="NCBI Taxonomy" id="9823"/>
</organismHost>
<reference key="1">
    <citation type="submission" date="2003-03" db="EMBL/GenBank/DDBJ databases">
        <title>African swine fever virus genomes.</title>
        <authorList>
            <person name="Kutish G.F."/>
            <person name="Rock D.L."/>
        </authorList>
    </citation>
    <scope>NUCLEOTIDE SEQUENCE [LARGE SCALE GENOMIC DNA]</scope>
</reference>
<gene>
    <name type="ordered locus">Ken-136</name>
</gene>
<protein>
    <recommendedName>
        <fullName>NifS-like protein</fullName>
    </recommendedName>
</protein>
<feature type="chain" id="PRO_0000373147" description="NifS-like protein">
    <location>
        <begin position="1"/>
        <end position="383"/>
    </location>
</feature>
<feature type="binding site" evidence="1">
    <location>
        <begin position="58"/>
        <end position="59"/>
    </location>
    <ligand>
        <name>pyridoxal 5'-phosphate</name>
        <dbReference type="ChEBI" id="CHEBI:597326"/>
    </ligand>
</feature>
<feature type="binding site" evidence="1">
    <location>
        <begin position="184"/>
        <end position="186"/>
    </location>
    <ligand>
        <name>pyridoxal 5'-phosphate</name>
        <dbReference type="ChEBI" id="CHEBI:597326"/>
    </ligand>
</feature>
<keyword id="KW-0426">Late protein</keyword>
<keyword id="KW-0663">Pyridoxal phosphate</keyword>
<keyword id="KW-0946">Virion</keyword>
<dbReference type="EMBL" id="AY261360">
    <property type="status" value="NOT_ANNOTATED_CDS"/>
    <property type="molecule type" value="Genomic_DNA"/>
</dbReference>
<dbReference type="SMR" id="P0C9D1"/>
<dbReference type="Proteomes" id="UP000000861">
    <property type="component" value="Segment"/>
</dbReference>
<dbReference type="GO" id="GO:0044423">
    <property type="term" value="C:virion component"/>
    <property type="evidence" value="ECO:0007669"/>
    <property type="project" value="UniProtKB-KW"/>
</dbReference>
<dbReference type="Gene3D" id="3.90.1150.10">
    <property type="entry name" value="Aspartate Aminotransferase, domain 1"/>
    <property type="match status" value="1"/>
</dbReference>
<dbReference type="Gene3D" id="3.40.640.10">
    <property type="entry name" value="Type I PLP-dependent aspartate aminotransferase-like (Major domain)"/>
    <property type="match status" value="1"/>
</dbReference>
<dbReference type="InterPro" id="IPR000192">
    <property type="entry name" value="Aminotrans_V_dom"/>
</dbReference>
<dbReference type="InterPro" id="IPR015424">
    <property type="entry name" value="PyrdxlP-dep_Trfase"/>
</dbReference>
<dbReference type="InterPro" id="IPR015421">
    <property type="entry name" value="PyrdxlP-dep_Trfase_major"/>
</dbReference>
<dbReference type="InterPro" id="IPR015422">
    <property type="entry name" value="PyrdxlP-dep_Trfase_small"/>
</dbReference>
<dbReference type="PANTHER" id="PTHR11601:SF34">
    <property type="entry name" value="CYSTEINE DESULFURASE"/>
    <property type="match status" value="1"/>
</dbReference>
<dbReference type="PANTHER" id="PTHR11601">
    <property type="entry name" value="CYSTEINE DESULFURYLASE FAMILY MEMBER"/>
    <property type="match status" value="1"/>
</dbReference>
<dbReference type="Pfam" id="PF00266">
    <property type="entry name" value="Aminotran_5"/>
    <property type="match status" value="1"/>
</dbReference>
<dbReference type="SUPFAM" id="SSF53383">
    <property type="entry name" value="PLP-dependent transferases"/>
    <property type="match status" value="1"/>
</dbReference>
<evidence type="ECO:0000250" key="1">
    <source>
        <dbReference type="UniProtKB" id="P0A6B9"/>
    </source>
</evidence>
<evidence type="ECO:0000250" key="2">
    <source>
        <dbReference type="UniProtKB" id="Q65192"/>
    </source>
</evidence>
<evidence type="ECO:0000305" key="3"/>